<proteinExistence type="inferred from homology"/>
<dbReference type="EC" id="6.3.5.-" evidence="1"/>
<dbReference type="EMBL" id="CP000686">
    <property type="protein sequence ID" value="ABQ89518.1"/>
    <property type="molecule type" value="Genomic_DNA"/>
</dbReference>
<dbReference type="RefSeq" id="WP_011955871.1">
    <property type="nucleotide sequence ID" value="NC_009523.1"/>
</dbReference>
<dbReference type="SMR" id="A5USB5"/>
<dbReference type="STRING" id="357808.RoseRS_1111"/>
<dbReference type="KEGG" id="rrs:RoseRS_1111"/>
<dbReference type="eggNOG" id="COG0064">
    <property type="taxonomic scope" value="Bacteria"/>
</dbReference>
<dbReference type="HOGENOM" id="CLU_019240_0_0_0"/>
<dbReference type="OrthoDB" id="9804078at2"/>
<dbReference type="Proteomes" id="UP000006554">
    <property type="component" value="Chromosome"/>
</dbReference>
<dbReference type="GO" id="GO:0050566">
    <property type="term" value="F:asparaginyl-tRNA synthase (glutamine-hydrolyzing) activity"/>
    <property type="evidence" value="ECO:0007669"/>
    <property type="project" value="RHEA"/>
</dbReference>
<dbReference type="GO" id="GO:0005524">
    <property type="term" value="F:ATP binding"/>
    <property type="evidence" value="ECO:0007669"/>
    <property type="project" value="UniProtKB-KW"/>
</dbReference>
<dbReference type="GO" id="GO:0050567">
    <property type="term" value="F:glutaminyl-tRNA synthase (glutamine-hydrolyzing) activity"/>
    <property type="evidence" value="ECO:0007669"/>
    <property type="project" value="UniProtKB-UniRule"/>
</dbReference>
<dbReference type="GO" id="GO:0070681">
    <property type="term" value="P:glutaminyl-tRNAGln biosynthesis via transamidation"/>
    <property type="evidence" value="ECO:0007669"/>
    <property type="project" value="TreeGrafter"/>
</dbReference>
<dbReference type="GO" id="GO:0006412">
    <property type="term" value="P:translation"/>
    <property type="evidence" value="ECO:0007669"/>
    <property type="project" value="UniProtKB-UniRule"/>
</dbReference>
<dbReference type="FunFam" id="1.10.10.410:FF:000001">
    <property type="entry name" value="Aspartyl/glutamyl-tRNA(Asn/Gln) amidotransferase subunit B"/>
    <property type="match status" value="1"/>
</dbReference>
<dbReference type="FunFam" id="1.10.150.380:FF:000001">
    <property type="entry name" value="Aspartyl/glutamyl-tRNA(Asn/Gln) amidotransferase subunit B"/>
    <property type="match status" value="1"/>
</dbReference>
<dbReference type="Gene3D" id="1.10.10.410">
    <property type="match status" value="1"/>
</dbReference>
<dbReference type="Gene3D" id="1.10.150.380">
    <property type="entry name" value="GatB domain, N-terminal subdomain"/>
    <property type="match status" value="1"/>
</dbReference>
<dbReference type="HAMAP" id="MF_00121">
    <property type="entry name" value="GatB"/>
    <property type="match status" value="1"/>
</dbReference>
<dbReference type="InterPro" id="IPR017959">
    <property type="entry name" value="Asn/Gln-tRNA_amidoTrfase_suB/E"/>
</dbReference>
<dbReference type="InterPro" id="IPR006075">
    <property type="entry name" value="Asn/Gln-tRNA_Trfase_suB/E_cat"/>
</dbReference>
<dbReference type="InterPro" id="IPR018027">
    <property type="entry name" value="Asn/Gln_amidotransferase"/>
</dbReference>
<dbReference type="InterPro" id="IPR003789">
    <property type="entry name" value="Asn/Gln_tRNA_amidoTrase-B-like"/>
</dbReference>
<dbReference type="InterPro" id="IPR004413">
    <property type="entry name" value="GatB"/>
</dbReference>
<dbReference type="InterPro" id="IPR042114">
    <property type="entry name" value="GatB_C_1"/>
</dbReference>
<dbReference type="InterPro" id="IPR023168">
    <property type="entry name" value="GatB_Yqey_C_2"/>
</dbReference>
<dbReference type="InterPro" id="IPR017958">
    <property type="entry name" value="Gln-tRNA_amidoTrfase_suB_CS"/>
</dbReference>
<dbReference type="InterPro" id="IPR014746">
    <property type="entry name" value="Gln_synth/guanido_kin_cat_dom"/>
</dbReference>
<dbReference type="NCBIfam" id="TIGR00133">
    <property type="entry name" value="gatB"/>
    <property type="match status" value="1"/>
</dbReference>
<dbReference type="NCBIfam" id="NF004012">
    <property type="entry name" value="PRK05477.1-2"/>
    <property type="match status" value="1"/>
</dbReference>
<dbReference type="NCBIfam" id="NF004014">
    <property type="entry name" value="PRK05477.1-4"/>
    <property type="match status" value="1"/>
</dbReference>
<dbReference type="PANTHER" id="PTHR11659">
    <property type="entry name" value="GLUTAMYL-TRNA GLN AMIDOTRANSFERASE SUBUNIT B MITOCHONDRIAL AND PROKARYOTIC PET112-RELATED"/>
    <property type="match status" value="1"/>
</dbReference>
<dbReference type="PANTHER" id="PTHR11659:SF0">
    <property type="entry name" value="GLUTAMYL-TRNA(GLN) AMIDOTRANSFERASE SUBUNIT B, MITOCHONDRIAL"/>
    <property type="match status" value="1"/>
</dbReference>
<dbReference type="Pfam" id="PF02934">
    <property type="entry name" value="GatB_N"/>
    <property type="match status" value="1"/>
</dbReference>
<dbReference type="Pfam" id="PF02637">
    <property type="entry name" value="GatB_Yqey"/>
    <property type="match status" value="1"/>
</dbReference>
<dbReference type="SMART" id="SM00845">
    <property type="entry name" value="GatB_Yqey"/>
    <property type="match status" value="1"/>
</dbReference>
<dbReference type="SUPFAM" id="SSF89095">
    <property type="entry name" value="GatB/YqeY motif"/>
    <property type="match status" value="1"/>
</dbReference>
<dbReference type="SUPFAM" id="SSF55931">
    <property type="entry name" value="Glutamine synthetase/guanido kinase"/>
    <property type="match status" value="1"/>
</dbReference>
<dbReference type="PROSITE" id="PS01234">
    <property type="entry name" value="GATB"/>
    <property type="match status" value="1"/>
</dbReference>
<comment type="function">
    <text evidence="1">Allows the formation of correctly charged Asn-tRNA(Asn) or Gln-tRNA(Gln) through the transamidation of misacylated Asp-tRNA(Asn) or Glu-tRNA(Gln) in organisms which lack either or both of asparaginyl-tRNA or glutaminyl-tRNA synthetases. The reaction takes place in the presence of glutamine and ATP through an activated phospho-Asp-tRNA(Asn) or phospho-Glu-tRNA(Gln).</text>
</comment>
<comment type="catalytic activity">
    <reaction evidence="1">
        <text>L-glutamyl-tRNA(Gln) + L-glutamine + ATP + H2O = L-glutaminyl-tRNA(Gln) + L-glutamate + ADP + phosphate + H(+)</text>
        <dbReference type="Rhea" id="RHEA:17521"/>
        <dbReference type="Rhea" id="RHEA-COMP:9681"/>
        <dbReference type="Rhea" id="RHEA-COMP:9684"/>
        <dbReference type="ChEBI" id="CHEBI:15377"/>
        <dbReference type="ChEBI" id="CHEBI:15378"/>
        <dbReference type="ChEBI" id="CHEBI:29985"/>
        <dbReference type="ChEBI" id="CHEBI:30616"/>
        <dbReference type="ChEBI" id="CHEBI:43474"/>
        <dbReference type="ChEBI" id="CHEBI:58359"/>
        <dbReference type="ChEBI" id="CHEBI:78520"/>
        <dbReference type="ChEBI" id="CHEBI:78521"/>
        <dbReference type="ChEBI" id="CHEBI:456216"/>
    </reaction>
</comment>
<comment type="catalytic activity">
    <reaction evidence="1">
        <text>L-aspartyl-tRNA(Asn) + L-glutamine + ATP + H2O = L-asparaginyl-tRNA(Asn) + L-glutamate + ADP + phosphate + 2 H(+)</text>
        <dbReference type="Rhea" id="RHEA:14513"/>
        <dbReference type="Rhea" id="RHEA-COMP:9674"/>
        <dbReference type="Rhea" id="RHEA-COMP:9677"/>
        <dbReference type="ChEBI" id="CHEBI:15377"/>
        <dbReference type="ChEBI" id="CHEBI:15378"/>
        <dbReference type="ChEBI" id="CHEBI:29985"/>
        <dbReference type="ChEBI" id="CHEBI:30616"/>
        <dbReference type="ChEBI" id="CHEBI:43474"/>
        <dbReference type="ChEBI" id="CHEBI:58359"/>
        <dbReference type="ChEBI" id="CHEBI:78515"/>
        <dbReference type="ChEBI" id="CHEBI:78516"/>
        <dbReference type="ChEBI" id="CHEBI:456216"/>
    </reaction>
</comment>
<comment type="subunit">
    <text evidence="1">Heterotrimer of A, B and C subunits.</text>
</comment>
<comment type="similarity">
    <text evidence="1">Belongs to the GatB/GatE family. GatB subfamily.</text>
</comment>
<keyword id="KW-0067">ATP-binding</keyword>
<keyword id="KW-0436">Ligase</keyword>
<keyword id="KW-0547">Nucleotide-binding</keyword>
<keyword id="KW-0648">Protein biosynthesis</keyword>
<organism>
    <name type="scientific">Roseiflexus sp. (strain RS-1)</name>
    <dbReference type="NCBI Taxonomy" id="357808"/>
    <lineage>
        <taxon>Bacteria</taxon>
        <taxon>Bacillati</taxon>
        <taxon>Chloroflexota</taxon>
        <taxon>Chloroflexia</taxon>
        <taxon>Chloroflexales</taxon>
        <taxon>Roseiflexineae</taxon>
        <taxon>Roseiflexaceae</taxon>
        <taxon>Roseiflexus</taxon>
    </lineage>
</organism>
<gene>
    <name evidence="1" type="primary">gatB</name>
    <name type="ordered locus">RoseRS_1111</name>
</gene>
<accession>A5USB5</accession>
<sequence>MDYLVTIGLEIHAQILTRSKMFCGCSADYADAPPNTHVCPVCMGLPGALPTPNRRAIELAALTGLALNCRISHTNVISRKNYFYADLPSGYQRSQYDDPLCVDGWVEIEGDSGPKRIRLTRVHIEEDTGKLIHTNDGGSLVDFNRAGVPLMEIVSKPDISSPEEARRYFQKLRQILVWIGVNSGDMESGALRCDANVSVRPAGQQEYGAKVEIKNINSFRFVERALAYEIERQIRALKAGEPIVQSTRGWDEVSGTTVAQRTKEFAEDYRYFPEPDIPPLHLTDAWIDERRAELPELPDARRIRFIEEYGLTAYDAGVLTDERTVSDYYEQAVAAARTRGVMPKEVANWLTGEFFRLLKETGESPAHAAQRMRPEYIGEVQELLNNGVITRTSAKEAFEAAFREGRSPAVIVAERGLAVIGAGDALTDLVRQVIAGNPKVVEEYRRGKATAIKYLIGQVMKATRGQANPQAVQQALEQELAREQAAC</sequence>
<name>GATB_ROSS1</name>
<feature type="chain" id="PRO_1000095240" description="Aspartyl/glutamyl-tRNA(Asn/Gln) amidotransferase subunit B">
    <location>
        <begin position="1"/>
        <end position="487"/>
    </location>
</feature>
<reference key="1">
    <citation type="submission" date="2007-04" db="EMBL/GenBank/DDBJ databases">
        <title>Complete sequence of Roseiflexus sp. RS-1.</title>
        <authorList>
            <consortium name="US DOE Joint Genome Institute"/>
            <person name="Copeland A."/>
            <person name="Lucas S."/>
            <person name="Lapidus A."/>
            <person name="Barry K."/>
            <person name="Detter J.C."/>
            <person name="Glavina del Rio T."/>
            <person name="Hammon N."/>
            <person name="Israni S."/>
            <person name="Dalin E."/>
            <person name="Tice H."/>
            <person name="Pitluck S."/>
            <person name="Chertkov O."/>
            <person name="Brettin T."/>
            <person name="Bruce D."/>
            <person name="Han C."/>
            <person name="Schmutz J."/>
            <person name="Larimer F."/>
            <person name="Land M."/>
            <person name="Hauser L."/>
            <person name="Kyrpides N."/>
            <person name="Mikhailova N."/>
            <person name="Bryant D.A."/>
            <person name="Richardson P."/>
        </authorList>
    </citation>
    <scope>NUCLEOTIDE SEQUENCE [LARGE SCALE GENOMIC DNA]</scope>
    <source>
        <strain>RS-1</strain>
    </source>
</reference>
<evidence type="ECO:0000255" key="1">
    <source>
        <dbReference type="HAMAP-Rule" id="MF_00121"/>
    </source>
</evidence>
<protein>
    <recommendedName>
        <fullName evidence="1">Aspartyl/glutamyl-tRNA(Asn/Gln) amidotransferase subunit B</fullName>
        <shortName evidence="1">Asp/Glu-ADT subunit B</shortName>
        <ecNumber evidence="1">6.3.5.-</ecNumber>
    </recommendedName>
</protein>